<feature type="chain" id="PRO_0000358725" description="Transcription factor MYC4">
    <location>
        <begin position="1"/>
        <end position="589"/>
    </location>
</feature>
<feature type="domain" description="bHLH" evidence="1">
    <location>
        <begin position="412"/>
        <end position="461"/>
    </location>
</feature>
<feature type="region of interest" description="JAZ-interaction domain">
    <location>
        <begin position="99"/>
        <end position="150"/>
    </location>
</feature>
<feature type="region of interest" description="Disordered" evidence="2">
    <location>
        <begin position="114"/>
        <end position="133"/>
    </location>
</feature>
<feature type="region of interest" description="Disordered" evidence="2">
    <location>
        <begin position="291"/>
        <end position="326"/>
    </location>
</feature>
<feature type="region of interest" description="Disordered" evidence="2">
    <location>
        <begin position="340"/>
        <end position="359"/>
    </location>
</feature>
<feature type="region of interest" description="Disordered" evidence="2">
    <location>
        <begin position="381"/>
        <end position="422"/>
    </location>
</feature>
<feature type="compositionally biased region" description="Low complexity" evidence="2">
    <location>
        <begin position="296"/>
        <end position="308"/>
    </location>
</feature>
<feature type="compositionally biased region" description="Polar residues" evidence="2">
    <location>
        <begin position="309"/>
        <end position="322"/>
    </location>
</feature>
<feature type="compositionally biased region" description="Basic and acidic residues" evidence="2">
    <location>
        <begin position="381"/>
        <end position="398"/>
    </location>
</feature>
<feature type="compositionally biased region" description="Basic residues" evidence="2">
    <location>
        <begin position="399"/>
        <end position="408"/>
    </location>
</feature>
<feature type="compositionally biased region" description="Basic and acidic residues" evidence="2">
    <location>
        <begin position="409"/>
        <end position="422"/>
    </location>
</feature>
<feature type="sequence conflict" description="In Ref. 1; AAL55711." evidence="8" ref="1">
    <original>S</original>
    <variation>A</variation>
    <location>
        <position position="2"/>
    </location>
</feature>
<accession>O49687</accession>
<accession>Q8W2F6</accession>
<protein>
    <recommendedName>
        <fullName>Transcription factor MYC4</fullName>
        <shortName>AtMYC4</shortName>
    </recommendedName>
    <alternativeName>
        <fullName>Basic helix-loop-helix protein 4</fullName>
        <shortName>AtbHLH4</shortName>
        <shortName>bHLH 4</shortName>
    </alternativeName>
    <alternativeName>
        <fullName>Transcription factor EN 37</fullName>
    </alternativeName>
    <alternativeName>
        <fullName>bHLH transcription factor bHLH004</fullName>
    </alternativeName>
</protein>
<organism>
    <name type="scientific">Arabidopsis thaliana</name>
    <name type="common">Mouse-ear cress</name>
    <dbReference type="NCBI Taxonomy" id="3702"/>
    <lineage>
        <taxon>Eukaryota</taxon>
        <taxon>Viridiplantae</taxon>
        <taxon>Streptophyta</taxon>
        <taxon>Embryophyta</taxon>
        <taxon>Tracheophyta</taxon>
        <taxon>Spermatophyta</taxon>
        <taxon>Magnoliopsida</taxon>
        <taxon>eudicotyledons</taxon>
        <taxon>Gunneridae</taxon>
        <taxon>Pentapetalae</taxon>
        <taxon>rosids</taxon>
        <taxon>malvids</taxon>
        <taxon>Brassicales</taxon>
        <taxon>Brassicaceae</taxon>
        <taxon>Camelineae</taxon>
        <taxon>Arabidopsis</taxon>
    </lineage>
</organism>
<reference key="1">
    <citation type="journal article" date="2003" name="Mol. Biol. Evol.">
        <title>The basic helix-loop-helix transcription factor family in plants: a genome-wide study of protein structure and functional diversity.</title>
        <authorList>
            <person name="Heim M.A."/>
            <person name="Jakoby M."/>
            <person name="Werber M."/>
            <person name="Martin C."/>
            <person name="Weisshaar B."/>
            <person name="Bailey P.C."/>
        </authorList>
    </citation>
    <scope>NUCLEOTIDE SEQUENCE [MRNA]</scope>
    <scope>INDUCTION BY UV LIGHT</scope>
    <scope>GENE FAMILY</scope>
    <scope>NOMENCLATURE</scope>
    <source>
        <strain>cv. Columbia</strain>
    </source>
</reference>
<reference key="2">
    <citation type="journal article" date="1999" name="Nature">
        <title>Sequence and analysis of chromosome 4 of the plant Arabidopsis thaliana.</title>
        <authorList>
            <person name="Mayer K.F.X."/>
            <person name="Schueller C."/>
            <person name="Wambutt R."/>
            <person name="Murphy G."/>
            <person name="Volckaert G."/>
            <person name="Pohl T."/>
            <person name="Duesterhoeft A."/>
            <person name="Stiekema W."/>
            <person name="Entian K.-D."/>
            <person name="Terryn N."/>
            <person name="Harris B."/>
            <person name="Ansorge W."/>
            <person name="Brandt P."/>
            <person name="Grivell L.A."/>
            <person name="Rieger M."/>
            <person name="Weichselgartner M."/>
            <person name="de Simone V."/>
            <person name="Obermaier B."/>
            <person name="Mache R."/>
            <person name="Mueller M."/>
            <person name="Kreis M."/>
            <person name="Delseny M."/>
            <person name="Puigdomenech P."/>
            <person name="Watson M."/>
            <person name="Schmidtheini T."/>
            <person name="Reichert B."/>
            <person name="Portetelle D."/>
            <person name="Perez-Alonso M."/>
            <person name="Boutry M."/>
            <person name="Bancroft I."/>
            <person name="Vos P."/>
            <person name="Hoheisel J."/>
            <person name="Zimmermann W."/>
            <person name="Wedler H."/>
            <person name="Ridley P."/>
            <person name="Langham S.-A."/>
            <person name="McCullagh B."/>
            <person name="Bilham L."/>
            <person name="Robben J."/>
            <person name="van der Schueren J."/>
            <person name="Grymonprez B."/>
            <person name="Chuang Y.-J."/>
            <person name="Vandenbussche F."/>
            <person name="Braeken M."/>
            <person name="Weltjens I."/>
            <person name="Voet M."/>
            <person name="Bastiaens I."/>
            <person name="Aert R."/>
            <person name="Defoor E."/>
            <person name="Weitzenegger T."/>
            <person name="Bothe G."/>
            <person name="Ramsperger U."/>
            <person name="Hilbert H."/>
            <person name="Braun M."/>
            <person name="Holzer E."/>
            <person name="Brandt A."/>
            <person name="Peters S."/>
            <person name="van Staveren M."/>
            <person name="Dirkse W."/>
            <person name="Mooijman P."/>
            <person name="Klein Lankhorst R."/>
            <person name="Rose M."/>
            <person name="Hauf J."/>
            <person name="Koetter P."/>
            <person name="Berneiser S."/>
            <person name="Hempel S."/>
            <person name="Feldpausch M."/>
            <person name="Lamberth S."/>
            <person name="Van den Daele H."/>
            <person name="De Keyser A."/>
            <person name="Buysshaert C."/>
            <person name="Gielen J."/>
            <person name="Villarroel R."/>
            <person name="De Clercq R."/>
            <person name="van Montagu M."/>
            <person name="Rogers J."/>
            <person name="Cronin A."/>
            <person name="Quail M.A."/>
            <person name="Bray-Allen S."/>
            <person name="Clark L."/>
            <person name="Doggett J."/>
            <person name="Hall S."/>
            <person name="Kay M."/>
            <person name="Lennard N."/>
            <person name="McLay K."/>
            <person name="Mayes R."/>
            <person name="Pettett A."/>
            <person name="Rajandream M.A."/>
            <person name="Lyne M."/>
            <person name="Benes V."/>
            <person name="Rechmann S."/>
            <person name="Borkova D."/>
            <person name="Bloecker H."/>
            <person name="Scharfe M."/>
            <person name="Grimm M."/>
            <person name="Loehnert T.-H."/>
            <person name="Dose S."/>
            <person name="de Haan M."/>
            <person name="Maarse A.C."/>
            <person name="Schaefer M."/>
            <person name="Mueller-Auer S."/>
            <person name="Gabel C."/>
            <person name="Fuchs M."/>
            <person name="Fartmann B."/>
            <person name="Granderath K."/>
            <person name="Dauner D."/>
            <person name="Herzl A."/>
            <person name="Neumann S."/>
            <person name="Argiriou A."/>
            <person name="Vitale D."/>
            <person name="Liguori R."/>
            <person name="Piravandi E."/>
            <person name="Massenet O."/>
            <person name="Quigley F."/>
            <person name="Clabauld G."/>
            <person name="Muendlein A."/>
            <person name="Felber R."/>
            <person name="Schnabl S."/>
            <person name="Hiller R."/>
            <person name="Schmidt W."/>
            <person name="Lecharny A."/>
            <person name="Aubourg S."/>
            <person name="Chefdor F."/>
            <person name="Cooke R."/>
            <person name="Berger C."/>
            <person name="Monfort A."/>
            <person name="Casacuberta E."/>
            <person name="Gibbons T."/>
            <person name="Weber N."/>
            <person name="Vandenbol M."/>
            <person name="Bargues M."/>
            <person name="Terol J."/>
            <person name="Torres A."/>
            <person name="Perez-Perez A."/>
            <person name="Purnelle B."/>
            <person name="Bent E."/>
            <person name="Johnson S."/>
            <person name="Tacon D."/>
            <person name="Jesse T."/>
            <person name="Heijnen L."/>
            <person name="Schwarz S."/>
            <person name="Scholler P."/>
            <person name="Heber S."/>
            <person name="Francs P."/>
            <person name="Bielke C."/>
            <person name="Frishman D."/>
            <person name="Haase D."/>
            <person name="Lemcke K."/>
            <person name="Mewes H.-W."/>
            <person name="Stocker S."/>
            <person name="Zaccaria P."/>
            <person name="Bevan M."/>
            <person name="Wilson R.K."/>
            <person name="de la Bastide M."/>
            <person name="Habermann K."/>
            <person name="Parnell L."/>
            <person name="Dedhia N."/>
            <person name="Gnoj L."/>
            <person name="Schutz K."/>
            <person name="Huang E."/>
            <person name="Spiegel L."/>
            <person name="Sekhon M."/>
            <person name="Murray J."/>
            <person name="Sheet P."/>
            <person name="Cordes M."/>
            <person name="Abu-Threideh J."/>
            <person name="Stoneking T."/>
            <person name="Kalicki J."/>
            <person name="Graves T."/>
            <person name="Harmon G."/>
            <person name="Edwards J."/>
            <person name="Latreille P."/>
            <person name="Courtney L."/>
            <person name="Cloud J."/>
            <person name="Abbott A."/>
            <person name="Scott K."/>
            <person name="Johnson D."/>
            <person name="Minx P."/>
            <person name="Bentley D."/>
            <person name="Fulton B."/>
            <person name="Miller N."/>
            <person name="Greco T."/>
            <person name="Kemp K."/>
            <person name="Kramer J."/>
            <person name="Fulton L."/>
            <person name="Mardis E."/>
            <person name="Dante M."/>
            <person name="Pepin K."/>
            <person name="Hillier L.W."/>
            <person name="Nelson J."/>
            <person name="Spieth J."/>
            <person name="Ryan E."/>
            <person name="Andrews S."/>
            <person name="Geisel C."/>
            <person name="Layman D."/>
            <person name="Du H."/>
            <person name="Ali J."/>
            <person name="Berghoff A."/>
            <person name="Jones K."/>
            <person name="Drone K."/>
            <person name="Cotton M."/>
            <person name="Joshu C."/>
            <person name="Antonoiu B."/>
            <person name="Zidanic M."/>
            <person name="Strong C."/>
            <person name="Sun H."/>
            <person name="Lamar B."/>
            <person name="Yordan C."/>
            <person name="Ma P."/>
            <person name="Zhong J."/>
            <person name="Preston R."/>
            <person name="Vil D."/>
            <person name="Shekher M."/>
            <person name="Matero A."/>
            <person name="Shah R."/>
            <person name="Swaby I.K."/>
            <person name="O'Shaughnessy A."/>
            <person name="Rodriguez M."/>
            <person name="Hoffman J."/>
            <person name="Till S."/>
            <person name="Granat S."/>
            <person name="Shohdy N."/>
            <person name="Hasegawa A."/>
            <person name="Hameed A."/>
            <person name="Lodhi M."/>
            <person name="Johnson A."/>
            <person name="Chen E."/>
            <person name="Marra M.A."/>
            <person name="Martienssen R."/>
            <person name="McCombie W.R."/>
        </authorList>
    </citation>
    <scope>NUCLEOTIDE SEQUENCE [LARGE SCALE GENOMIC DNA]</scope>
    <source>
        <strain>cv. Columbia</strain>
    </source>
</reference>
<reference key="3">
    <citation type="journal article" date="2017" name="Plant J.">
        <title>Araport11: a complete reannotation of the Arabidopsis thaliana reference genome.</title>
        <authorList>
            <person name="Cheng C.Y."/>
            <person name="Krishnakumar V."/>
            <person name="Chan A.P."/>
            <person name="Thibaud-Nissen F."/>
            <person name="Schobel S."/>
            <person name="Town C.D."/>
        </authorList>
    </citation>
    <scope>GENOME REANNOTATION</scope>
    <source>
        <strain>cv. Columbia</strain>
    </source>
</reference>
<reference key="4">
    <citation type="submission" date="2005-03" db="EMBL/GenBank/DDBJ databases">
        <title>Large-scale analysis of RIKEN Arabidopsis full-length (RAFL) cDNAs.</title>
        <authorList>
            <person name="Totoki Y."/>
            <person name="Seki M."/>
            <person name="Ishida J."/>
            <person name="Nakajima M."/>
            <person name="Enju A."/>
            <person name="Kamiya A."/>
            <person name="Narusaka M."/>
            <person name="Shin-i T."/>
            <person name="Nakagawa M."/>
            <person name="Sakamoto N."/>
            <person name="Oishi K."/>
            <person name="Kohara Y."/>
            <person name="Kobayashi M."/>
            <person name="Toyoda A."/>
            <person name="Sakaki Y."/>
            <person name="Sakurai T."/>
            <person name="Iida K."/>
            <person name="Akiyama K."/>
            <person name="Satou M."/>
            <person name="Toyoda T."/>
            <person name="Konagaya A."/>
            <person name="Carninci P."/>
            <person name="Kawai J."/>
            <person name="Hayashizaki Y."/>
            <person name="Shinozaki K."/>
        </authorList>
    </citation>
    <scope>NUCLEOTIDE SEQUENCE [LARGE SCALE MRNA]</scope>
    <source>
        <strain>cv. Columbia</strain>
    </source>
</reference>
<reference key="5">
    <citation type="journal article" date="2003" name="Plant Cell">
        <title>Arabidopsis AtMYC2 (bHLH) and AtMYB2 (MYB) function as transcriptional activators in abscisic acid signaling.</title>
        <authorList>
            <person name="Abe H."/>
            <person name="Urao T."/>
            <person name="Ito T."/>
            <person name="Seki M."/>
            <person name="Shinozaki K."/>
            <person name="Yamaguchi-Shinozaki K."/>
        </authorList>
    </citation>
    <scope>TISSUE SPECIFICITY</scope>
</reference>
<reference key="6">
    <citation type="journal article" date="2003" name="Plant Cell">
        <title>The Arabidopsis basic/helix-loop-helix transcription factor family.</title>
        <authorList>
            <person name="Toledo-Ortiz G."/>
            <person name="Huq E."/>
            <person name="Quail P.H."/>
        </authorList>
    </citation>
    <scope>GENE FAMILY</scope>
</reference>
<reference key="7">
    <citation type="journal article" date="2003" name="Plant Cell">
        <title>Update on the basic helix-loop-helix transcription factor gene family in Arabidopsis thaliana.</title>
        <authorList>
            <person name="Bailey P.C."/>
            <person name="Martin C."/>
            <person name="Toledo-Ortiz G."/>
            <person name="Quail P.H."/>
            <person name="Huq E."/>
            <person name="Heim M.A."/>
            <person name="Jakoby M."/>
            <person name="Werber M."/>
            <person name="Weisshaar B."/>
        </authorList>
    </citation>
    <scope>GENE FAMILY</scope>
    <scope>NOMENCLATURE</scope>
</reference>
<reference key="8">
    <citation type="journal article" date="2011" name="J. Exp. Bot.">
        <title>Characterization of JAZ-interacting bHLH transcription factors that regulate jasmonate responses in Arabidopsis.</title>
        <authorList>
            <person name="Niu Y."/>
            <person name="Figueroa P."/>
            <person name="Browse J."/>
        </authorList>
    </citation>
    <scope>FUNCTION</scope>
    <scope>INTERACTION WITH TIFY10A/JAZ1; TIFY6B/JAZ3 AND TIFY7/JAZ9</scope>
    <scope>SUBCELLULAR LOCATION</scope>
    <scope>DISRUPTION PHENOTYPE</scope>
</reference>
<reference key="9">
    <citation type="journal article" date="2011" name="Plant Cell">
        <title>The Arabidopsis bHLH transcription factors MYC3 and MYC4 are targets of JAZ repressors and act additively with MYC2 in the activation of jasmonate responses.</title>
        <authorList>
            <person name="Fernandez-Calvo P."/>
            <person name="Chini A."/>
            <person name="Fernandez-Barbero G."/>
            <person name="Chico J.M."/>
            <person name="Gimenez-Ibanez S."/>
            <person name="Geerinck J."/>
            <person name="Eeckhout D."/>
            <person name="Schweizer F."/>
            <person name="Godoy M."/>
            <person name="Franco-Zorrilla J.M."/>
            <person name="Pauwels L."/>
            <person name="Witters E."/>
            <person name="Puga M.I."/>
            <person name="Paz-Ares J."/>
            <person name="Goossens A."/>
            <person name="Reymond P."/>
            <person name="De Jaeger G."/>
            <person name="Solano R."/>
        </authorList>
    </citation>
    <scope>FUNCTION</scope>
    <scope>INTERACTION WITH TIFY10A/JAZ1; TIFY10B/JAZ2; TIFY6B/JAZ3; TIFY6A/JAZ4; TIFY11A/JAZ5; TIFY11B/JAZ6; TIFY5B/JAZ7; TIFY5A/JAZ8; TIFY7/JAZ9; TIFY9/JAZ10; TIFY3A/JAZ11; TIFY3B/JAZ12; MYC3 AND AFPH2/NINJA</scope>
    <scope>SUBUNIT</scope>
    <scope>SUBCELLULAR LOCATION</scope>
    <scope>TISSUE SPECIFICITY</scope>
    <scope>INDUCTION BY JASMONIC ACID</scope>
    <scope>DISRUPTION PHENOTYPE</scope>
</reference>
<reference key="10">
    <citation type="journal article" date="2013" name="Plant Cell">
        <title>Arabidopsis basic helix-loop-helix transcription factors MYC2, MYC3, and MYC4 regulate glucosinolate biosynthesis, insect performance, and feeding behavior.</title>
        <authorList>
            <person name="Schweizer F."/>
            <person name="Fernandez-Calvo P."/>
            <person name="Zander M."/>
            <person name="Diez-Diaz M."/>
            <person name="Fonseca S."/>
            <person name="Glauser G."/>
            <person name="Lewsey M.G."/>
            <person name="Ecker J.R."/>
            <person name="Solano R."/>
            <person name="Reymond P."/>
        </authorList>
    </citation>
    <scope>FUNCTION</scope>
    <scope>DISRUPTION PHENOTYPE</scope>
    <scope>DOMAIN</scope>
    <scope>INTERACTION WITH MYB28; MYB29; MYB34; MYB51; MYB76 AND MYB122</scope>
</reference>
<dbReference type="EMBL" id="AF251689">
    <property type="protein sequence ID" value="AAL55711.1"/>
    <property type="molecule type" value="mRNA"/>
</dbReference>
<dbReference type="EMBL" id="AL021889">
    <property type="protein sequence ID" value="CAA17131.1"/>
    <property type="molecule type" value="Genomic_DNA"/>
</dbReference>
<dbReference type="EMBL" id="AL161547">
    <property type="protein sequence ID" value="CAB78790.1"/>
    <property type="molecule type" value="Genomic_DNA"/>
</dbReference>
<dbReference type="EMBL" id="CP002687">
    <property type="protein sequence ID" value="AEE83960.1"/>
    <property type="molecule type" value="Genomic_DNA"/>
</dbReference>
<dbReference type="EMBL" id="AK221507">
    <property type="protein sequence ID" value="BAD94748.1"/>
    <property type="molecule type" value="mRNA"/>
</dbReference>
<dbReference type="PIR" id="T05074">
    <property type="entry name" value="T05074"/>
</dbReference>
<dbReference type="RefSeq" id="NP_193522.1">
    <property type="nucleotide sequence ID" value="NM_117897.4"/>
</dbReference>
<dbReference type="SMR" id="O49687"/>
<dbReference type="BioGRID" id="12804">
    <property type="interactions" value="29"/>
</dbReference>
<dbReference type="DIP" id="DIP-61779N"/>
<dbReference type="FunCoup" id="O49687">
    <property type="interactions" value="11"/>
</dbReference>
<dbReference type="IntAct" id="O49687">
    <property type="interactions" value="12"/>
</dbReference>
<dbReference type="STRING" id="3702.O49687"/>
<dbReference type="PaxDb" id="3702-AT4G17880.1"/>
<dbReference type="ProteomicsDB" id="248917"/>
<dbReference type="EnsemblPlants" id="AT4G17880.1">
    <property type="protein sequence ID" value="AT4G17880.1"/>
    <property type="gene ID" value="AT4G17880"/>
</dbReference>
<dbReference type="GeneID" id="827511"/>
<dbReference type="Gramene" id="AT4G17880.1">
    <property type="protein sequence ID" value="AT4G17880.1"/>
    <property type="gene ID" value="AT4G17880"/>
</dbReference>
<dbReference type="KEGG" id="ath:AT4G17880"/>
<dbReference type="Araport" id="AT4G17880"/>
<dbReference type="TAIR" id="AT4G17880">
    <property type="gene designation" value="MYC4"/>
</dbReference>
<dbReference type="eggNOG" id="ENOG502QUFW">
    <property type="taxonomic scope" value="Eukaryota"/>
</dbReference>
<dbReference type="HOGENOM" id="CLU_021132_0_1_1"/>
<dbReference type="InParanoid" id="O49687"/>
<dbReference type="OMA" id="RIQCSKR"/>
<dbReference type="PhylomeDB" id="O49687"/>
<dbReference type="PRO" id="PR:O49687"/>
<dbReference type="Proteomes" id="UP000006548">
    <property type="component" value="Chromosome 4"/>
</dbReference>
<dbReference type="ExpressionAtlas" id="O49687">
    <property type="expression patterns" value="baseline and differential"/>
</dbReference>
<dbReference type="GO" id="GO:0005634">
    <property type="term" value="C:nucleus"/>
    <property type="evidence" value="ECO:0000314"/>
    <property type="project" value="TAIR"/>
</dbReference>
<dbReference type="GO" id="GO:0043425">
    <property type="term" value="F:bHLH transcription factor binding"/>
    <property type="evidence" value="ECO:0000353"/>
    <property type="project" value="TAIR"/>
</dbReference>
<dbReference type="GO" id="GO:0003677">
    <property type="term" value="F:DNA binding"/>
    <property type="evidence" value="ECO:0007669"/>
    <property type="project" value="UniProtKB-KW"/>
</dbReference>
<dbReference type="GO" id="GO:0003700">
    <property type="term" value="F:DNA-binding transcription factor activity"/>
    <property type="evidence" value="ECO:0000250"/>
    <property type="project" value="TAIR"/>
</dbReference>
<dbReference type="GO" id="GO:0046983">
    <property type="term" value="F:protein dimerization activity"/>
    <property type="evidence" value="ECO:0007669"/>
    <property type="project" value="InterPro"/>
</dbReference>
<dbReference type="GO" id="GO:0009718">
    <property type="term" value="P:anthocyanin-containing compound biosynthetic process"/>
    <property type="evidence" value="ECO:0000315"/>
    <property type="project" value="TAIR"/>
</dbReference>
<dbReference type="GO" id="GO:0006952">
    <property type="term" value="P:defense response"/>
    <property type="evidence" value="ECO:0000315"/>
    <property type="project" value="TAIR"/>
</dbReference>
<dbReference type="GO" id="GO:0106167">
    <property type="term" value="P:extracellular ATP signaling"/>
    <property type="evidence" value="ECO:0000315"/>
    <property type="project" value="TAIR"/>
</dbReference>
<dbReference type="GO" id="GO:0045893">
    <property type="term" value="P:positive regulation of DNA-templated transcription"/>
    <property type="evidence" value="ECO:0000314"/>
    <property type="project" value="TAIR"/>
</dbReference>
<dbReference type="GO" id="GO:0006355">
    <property type="term" value="P:regulation of DNA-templated transcription"/>
    <property type="evidence" value="ECO:0000304"/>
    <property type="project" value="TAIR"/>
</dbReference>
<dbReference type="GO" id="GO:2000652">
    <property type="term" value="P:regulation of secondary cell wall biogenesis"/>
    <property type="evidence" value="ECO:0000315"/>
    <property type="project" value="TAIR"/>
</dbReference>
<dbReference type="GO" id="GO:0010374">
    <property type="term" value="P:stomatal complex development"/>
    <property type="evidence" value="ECO:0000316"/>
    <property type="project" value="TAIR"/>
</dbReference>
<dbReference type="CDD" id="cd11449">
    <property type="entry name" value="bHLH_AtAIB_like"/>
    <property type="match status" value="1"/>
</dbReference>
<dbReference type="FunFam" id="4.10.280.10:FF:000078">
    <property type="entry name" value="Transcription factor bHLH13"/>
    <property type="match status" value="1"/>
</dbReference>
<dbReference type="Gene3D" id="4.10.280.10">
    <property type="entry name" value="Helix-loop-helix DNA-binding domain"/>
    <property type="match status" value="1"/>
</dbReference>
<dbReference type="InterPro" id="IPR045084">
    <property type="entry name" value="AIB/MYC-like"/>
</dbReference>
<dbReference type="InterPro" id="IPR054502">
    <property type="entry name" value="bHLH-TF_ACT-like_plant"/>
</dbReference>
<dbReference type="InterPro" id="IPR011598">
    <property type="entry name" value="bHLH_dom"/>
</dbReference>
<dbReference type="InterPro" id="IPR036638">
    <property type="entry name" value="HLH_DNA-bd_sf"/>
</dbReference>
<dbReference type="InterPro" id="IPR025610">
    <property type="entry name" value="MYC/MYB_N"/>
</dbReference>
<dbReference type="PANTHER" id="PTHR11514">
    <property type="entry name" value="MYC"/>
    <property type="match status" value="1"/>
</dbReference>
<dbReference type="PANTHER" id="PTHR11514:SF155">
    <property type="entry name" value="TRANSCRIPTION FACTOR MYC4"/>
    <property type="match status" value="1"/>
</dbReference>
<dbReference type="Pfam" id="PF14215">
    <property type="entry name" value="bHLH-MYC_N"/>
    <property type="match status" value="1"/>
</dbReference>
<dbReference type="Pfam" id="PF22754">
    <property type="entry name" value="bHLH-TF_ACT-like_plant"/>
    <property type="match status" value="1"/>
</dbReference>
<dbReference type="Pfam" id="PF00010">
    <property type="entry name" value="HLH"/>
    <property type="match status" value="1"/>
</dbReference>
<dbReference type="SMART" id="SM00353">
    <property type="entry name" value="HLH"/>
    <property type="match status" value="1"/>
</dbReference>
<dbReference type="SUPFAM" id="SSF47459">
    <property type="entry name" value="HLH, helix-loop-helix DNA-binding domain"/>
    <property type="match status" value="1"/>
</dbReference>
<dbReference type="PROSITE" id="PS50888">
    <property type="entry name" value="BHLH"/>
    <property type="match status" value="1"/>
</dbReference>
<comment type="function">
    <text evidence="5 6 7">Transcription factor involved in jasmonic acid (JA) gene regulation. With MYC2 and MYC3, controls additively subsets of JA-dependent responses. Can form complexes with all known glucosinolate-related MYBs to regulate glucosinolate biosynthesis. Binds to the G-box (5'-CACGTG-3') of promoters. Activates multiple TIFY/JAZ promoters.</text>
</comment>
<comment type="subunit">
    <text evidence="5 6 7">Homo- and heterodimer. Interacts with MYB28, MYB29, MYB34, MYB51, MYB76, MYB122, MYC3, AFPH2/NINJA and the JAZ repressors TIFY10A/JAZ1, TIFY10B/JAZ2, TIFY6B/JAZ3, TIFY6A/JAZ4, TIFY11A/JAZ5, TIFY11B/JAZ6, TIFY5B/JAZ7, TIFY5A/JAZ8, TIFY7/JAZ9, TIFY9/JAZ10, TIFY3A/JAZ11 and TIFY3B/JAZ12.</text>
</comment>
<comment type="interaction">
    <interactant intactId="EBI-15406909">
        <id>O49687</id>
    </interactant>
    <interactant intactId="EBI-541107">
        <id>Q9LUA3</id>
        <label>NIMIN-2</label>
    </interactant>
    <organismsDiffer>false</organismsDiffer>
    <experiments>3</experiments>
</comment>
<comment type="interaction">
    <interactant intactId="EBI-15406909">
        <id>O49687</id>
    </interactant>
    <interactant intactId="EBI-15403807">
        <id>O64687</id>
        <label>TIFY 5B</label>
    </interactant>
    <organismsDiffer>false</organismsDiffer>
    <experiments>3</experiments>
</comment>
<comment type="interaction">
    <interactant intactId="EBI-15406909">
        <id>O49687</id>
    </interactant>
    <interactant intactId="EBI-1388539">
        <id>Q9LMA8</id>
        <label>TIFY10A</label>
    </interactant>
    <organismsDiffer>false</organismsDiffer>
    <experiments>3</experiments>
</comment>
<comment type="interaction">
    <interactant intactId="EBI-15406909">
        <id>O49687</id>
    </interactant>
    <interactant intactId="EBI-1792563">
        <id>Q9S7M2</id>
        <label>TIFY10B</label>
    </interactant>
    <organismsDiffer>false</organismsDiffer>
    <experiments>3</experiments>
</comment>
<comment type="interaction">
    <interactant intactId="EBI-15406909">
        <id>O49687</id>
    </interactant>
    <interactant intactId="EBI-2312095">
        <id>Q9LDU5</id>
        <label>TIFY11A</label>
    </interactant>
    <organismsDiffer>false</organismsDiffer>
    <experiments>3</experiments>
</comment>
<comment type="interaction">
    <interactant intactId="EBI-15406909">
        <id>O49687</id>
    </interactant>
    <interactant intactId="EBI-2312120">
        <id>Q9C9E3</id>
        <label>TIFY11B</label>
    </interactant>
    <organismsDiffer>false</organismsDiffer>
    <experiments>3</experiments>
</comment>
<comment type="interaction">
    <interactant intactId="EBI-15406909">
        <id>O49687</id>
    </interactant>
    <interactant intactId="EBI-2312231">
        <id>Q9C5K8</id>
        <label>TIFY3B</label>
    </interactant>
    <organismsDiffer>false</organismsDiffer>
    <experiments>4</experiments>
</comment>
<comment type="interaction">
    <interactant intactId="EBI-15406909">
        <id>O49687</id>
    </interactant>
    <interactant intactId="EBI-2312143">
        <id>Q8LBM2</id>
        <label>TIFY5A</label>
    </interactant>
    <organismsDiffer>false</organismsDiffer>
    <experiments>4</experiments>
</comment>
<comment type="interaction">
    <interactant intactId="EBI-15406909">
        <id>O49687</id>
    </interactant>
    <interactant intactId="EBI-1792431">
        <id>Q9LVI4</id>
        <label>TIFY6B</label>
    </interactant>
    <organismsDiffer>false</organismsDiffer>
    <experiments>3</experiments>
</comment>
<comment type="interaction">
    <interactant intactId="EBI-15406909">
        <id>O49687</id>
    </interactant>
    <interactant intactId="EBI-1792583">
        <id>Q8W4J8</id>
        <label>TIFY7</label>
    </interactant>
    <organismsDiffer>false</organismsDiffer>
    <experiments>8</experiments>
</comment>
<comment type="interaction">
    <interactant intactId="EBI-15406909">
        <id>O49687</id>
    </interactant>
    <interactant intactId="EBI-2312172">
        <id>Q93ZM9</id>
        <label>TIFY9</label>
    </interactant>
    <organismsDiffer>false</organismsDiffer>
    <experiments>3</experiments>
</comment>
<comment type="subcellular location">
    <subcellularLocation>
        <location evidence="1 5 6">Nucleus</location>
    </subcellularLocation>
</comment>
<comment type="tissue specificity">
    <text evidence="3 6">Expressed constitutively at low levels. Preferentially expressed in vascular tissues.</text>
</comment>
<comment type="induction">
    <text evidence="4 6">By UV treatment. Not induced by jasmonic acid.</text>
</comment>
<comment type="domain">
    <text evidence="7">The JAZ-interaction domain (JID) (99-150) is sufficient for interaction with MYB proteins and most of the TIFY/JAZ proteins.</text>
</comment>
<comment type="disruption phenotype">
    <text evidence="5 6 7">Minor effect on jasmonic acid response and no effect on glucosinolate biosynthesis. Myc2 and myc4 double mutant has an increased insensitivity to jasmonic acid. Myc2, myc3 and myc4 triple mutant has no jasmonate-related defense response, is devoid of glucosinolates and is extremely susceptible to generalist herbivores.</text>
</comment>
<keyword id="KW-0238">DNA-binding</keyword>
<keyword id="KW-0539">Nucleus</keyword>
<keyword id="KW-1185">Reference proteome</keyword>
<keyword id="KW-0804">Transcription</keyword>
<keyword id="KW-0805">Transcription regulation</keyword>
<sequence length="589" mass="64589">MSPTNVQVTDYHLNQSKTDTTNLWSTDDDASVMEAFIGGGSDHSSLFPPLPPPPLPQVNEDNLQQRLQALIEGANENWTYAVFWQSSHGFAGEDNNNNNTVLLGWGDGYYKGEEEKSRKKKSNPASAAEQEHRKRVIRELNSLISGGVGGGDEAGDEEVTDTEWFFLVSMTQSFVKGTGLPGQAFSNSDTIWLSGSNALAGSSCERARQGQIYGLQTMVCVATENGVVELGSSEIIHQSSDLVDKVDTFFNFNNGGGEFGSWAFNLNPDQGENDPGLWISEPNGVDSGLVAAPVMNNGGNDSTSNSDSQPISKLCNGSSVENPNPKVLKSCEMVNFKNGIENGQEEDSSNKKRSPVSNNEEGMLSFTSVLPCDSNHSDLEASVAKEAESNRVVVEPEKKPRKRGRKPANGREEPLNHVEAERQRREKLNQRFYSLRAVVPNVSKMDKASLLGDAISYISELKSKLQKAESDKEELQKQIDVMNKEAGNAKSSVKDRKCLNQESSVLIEMEVDVKIIGWDAMIRIQCSKRNHPGAKFMEALKELDLEVNHASLSVVNDLMIQQATVKMGNQFFTQDQLKVALTEKVGECP</sequence>
<proteinExistence type="evidence at protein level"/>
<evidence type="ECO:0000255" key="1">
    <source>
        <dbReference type="PROSITE-ProRule" id="PRU00981"/>
    </source>
</evidence>
<evidence type="ECO:0000256" key="2">
    <source>
        <dbReference type="SAM" id="MobiDB-lite"/>
    </source>
</evidence>
<evidence type="ECO:0000269" key="3">
    <source>
    </source>
</evidence>
<evidence type="ECO:0000269" key="4">
    <source>
    </source>
</evidence>
<evidence type="ECO:0000269" key="5">
    <source>
    </source>
</evidence>
<evidence type="ECO:0000269" key="6">
    <source>
    </source>
</evidence>
<evidence type="ECO:0000269" key="7">
    <source>
    </source>
</evidence>
<evidence type="ECO:0000305" key="8"/>
<name>MYC4_ARATH</name>
<gene>
    <name type="primary">MYC4</name>
    <name type="synonym">BHLH4</name>
    <name type="synonym">EN37</name>
    <name type="ordered locus">At4g17880</name>
    <name type="ORF">T6K21.60</name>
</gene>